<comment type="function">
    <text>Involved in transcriptional activation. Component of the SWI/SNF complex, an ATP-dependent chromatin remodeling complex, which is required for the positive and negative regulation of gene expression of a large number of genes. It changes chromatin structure by altering DNA-histone contacts within a nucleosome, leading eventually to a change in nucleosome position, thus facilitating or repressing binding of gene-specific transcription factors.</text>
</comment>
<comment type="subunit">
    <text>Component of the SWI/SNF global transcription activator complex. The 1.14 MDa SWI/SNF complex is composed of 11 different subunits: one copy each of SWI1, SNF2/SWI2, SNF5, SNF12/SWP73, ARP7/SWP61, ARP9/SWP59; two copies each of SWI3, SNF6, SNF11, SWP82; and three copies of TAF14/SWP29.</text>
</comment>
<comment type="subcellular location">
    <subcellularLocation>
        <location evidence="2 5">Nucleus</location>
    </subcellularLocation>
    <text>While the soluble protein is nuclear, [SWI+] aggregates appear to be cytoplasmic.</text>
</comment>
<comment type="domain">
    <text evidence="1 6">The prion domain (PrD) is a Gln/Asn (Q/N)-rich domain, which is unstructured in its native, soluble form, and which forms a parallel in-register beta-sheet in its amyloid form (By similarity). The first 37 residues of this domain are sufficient for aggregation, propagation, and transmission of the [SWI+] prion.</text>
</comment>
<comment type="miscellaneous">
    <text evidence="8 9 10">[SWI+] is the prion form of SWI1 (PubMed:18362884). [SWI+] is the result of a conformational change of the cellular SWI1 protein that becomes self-propagating and infectious. This conformational change generates a form of SWI1 that assembles into amyloid fibrils (PubMed:20679490). [SWI+]-aggregates sequester soluble SWI1, resulting in reduced growth on carbon sources other than glucose, reminiscent of a partial loss of function of the SWI/SNF chromatin-remodeling complex. [SWI+] can be cured by GdnHCl and by deletion of the molecular chaperone HSP104, which is required for [SWI+] propagation (PubMed:18362884). [SWI+] propagation is highly dependent upon the action of members of the Hsp70 molecular chaperone system, specifically the Hsp70 SSA, two of its J-protein co-chaperones, SIS1 and YDJ1, and the nucleotide exchange factors of the Hsp110 family (SSE1/2). Both under- and overexpression of components of this system initiate rapid loss of the prion from the cell population. It is speculated that prion properties of transcription factors may generate an optimized phenotypic heterogeneity that buffers yeast populations against diverse environmental insults (PubMed:21379326).</text>
</comment>
<comment type="miscellaneous">
    <text evidence="4">Present with 92 molecules/cell in log phase SD medium.</text>
</comment>
<comment type="similarity">
    <text evidence="7">Belongs to the SWI1 family.</text>
</comment>
<organism>
    <name type="scientific">Saccharomyces cerevisiae (strain ATCC 204508 / S288c)</name>
    <name type="common">Baker's yeast</name>
    <dbReference type="NCBI Taxonomy" id="559292"/>
    <lineage>
        <taxon>Eukaryota</taxon>
        <taxon>Fungi</taxon>
        <taxon>Dikarya</taxon>
        <taxon>Ascomycota</taxon>
        <taxon>Saccharomycotina</taxon>
        <taxon>Saccharomycetes</taxon>
        <taxon>Saccharomycetales</taxon>
        <taxon>Saccharomycetaceae</taxon>
        <taxon>Saccharomyces</taxon>
    </lineage>
</organism>
<gene>
    <name type="primary">SWI1</name>
    <name type="synonym">ADR6</name>
    <name type="synonym">GAM3</name>
    <name type="ordered locus">YPL016W</name>
    <name type="ORF">LPA1</name>
</gene>
<keyword id="KW-0002">3D-structure</keyword>
<keyword id="KW-0010">Activator</keyword>
<keyword id="KW-0034">Amyloid</keyword>
<keyword id="KW-0238">DNA-binding</keyword>
<keyword id="KW-0479">Metal-binding</keyword>
<keyword id="KW-0539">Nucleus</keyword>
<keyword id="KW-0640">Prion</keyword>
<keyword id="KW-1185">Reference proteome</keyword>
<keyword id="KW-0804">Transcription</keyword>
<keyword id="KW-0805">Transcription regulation</keyword>
<keyword id="KW-0862">Zinc</keyword>
<keyword id="KW-0863">Zinc-finger</keyword>
<reference key="1">
    <citation type="journal article" date="1988" name="Nucleic Acids Res.">
        <title>The yeast ADR6 gene encodes homopolymeric amino acid sequences and a potential metal-binding domain.</title>
        <authorList>
            <person name="O'Hara P.J."/>
            <person name="Horowitz H."/>
            <person name="Eichinger G."/>
            <person name="Young E.T."/>
        </authorList>
    </citation>
    <scope>NUCLEOTIDE SEQUENCE [GENOMIC DNA]</scope>
</reference>
<reference key="2">
    <citation type="journal article" date="1997" name="Nature">
        <title>The nucleotide sequence of Saccharomyces cerevisiae chromosome XVI.</title>
        <authorList>
            <person name="Bussey H."/>
            <person name="Storms R.K."/>
            <person name="Ahmed A."/>
            <person name="Albermann K."/>
            <person name="Allen E."/>
            <person name="Ansorge W."/>
            <person name="Araujo R."/>
            <person name="Aparicio A."/>
            <person name="Barrell B.G."/>
            <person name="Badcock K."/>
            <person name="Benes V."/>
            <person name="Botstein D."/>
            <person name="Bowman S."/>
            <person name="Brueckner M."/>
            <person name="Carpenter J."/>
            <person name="Cherry J.M."/>
            <person name="Chung E."/>
            <person name="Churcher C.M."/>
            <person name="Coster F."/>
            <person name="Davis K."/>
            <person name="Davis R.W."/>
            <person name="Dietrich F.S."/>
            <person name="Delius H."/>
            <person name="DiPaolo T."/>
            <person name="Dubois E."/>
            <person name="Duesterhoeft A."/>
            <person name="Duncan M."/>
            <person name="Floeth M."/>
            <person name="Fortin N."/>
            <person name="Friesen J.D."/>
            <person name="Fritz C."/>
            <person name="Goffeau A."/>
            <person name="Hall J."/>
            <person name="Hebling U."/>
            <person name="Heumann K."/>
            <person name="Hilbert H."/>
            <person name="Hillier L.W."/>
            <person name="Hunicke-Smith S."/>
            <person name="Hyman R.W."/>
            <person name="Johnston M."/>
            <person name="Kalman S."/>
            <person name="Kleine K."/>
            <person name="Komp C."/>
            <person name="Kurdi O."/>
            <person name="Lashkari D."/>
            <person name="Lew H."/>
            <person name="Lin A."/>
            <person name="Lin D."/>
            <person name="Louis E.J."/>
            <person name="Marathe R."/>
            <person name="Messenguy F."/>
            <person name="Mewes H.-W."/>
            <person name="Mirtipati S."/>
            <person name="Moestl D."/>
            <person name="Mueller-Auer S."/>
            <person name="Namath A."/>
            <person name="Nentwich U."/>
            <person name="Oefner P."/>
            <person name="Pearson D."/>
            <person name="Petel F.X."/>
            <person name="Pohl T.M."/>
            <person name="Purnelle B."/>
            <person name="Rajandream M.A."/>
            <person name="Rechmann S."/>
            <person name="Rieger M."/>
            <person name="Riles L."/>
            <person name="Roberts D."/>
            <person name="Schaefer M."/>
            <person name="Scharfe M."/>
            <person name="Scherens B."/>
            <person name="Schramm S."/>
            <person name="Schroeder M."/>
            <person name="Sdicu A.-M."/>
            <person name="Tettelin H."/>
            <person name="Urrestarazu L.A."/>
            <person name="Ushinsky S."/>
            <person name="Vierendeels F."/>
            <person name="Vissers S."/>
            <person name="Voss H."/>
            <person name="Walsh S.V."/>
            <person name="Wambutt R."/>
            <person name="Wang Y."/>
            <person name="Wedler E."/>
            <person name="Wedler H."/>
            <person name="Winnett E."/>
            <person name="Zhong W.-W."/>
            <person name="Zollner A."/>
            <person name="Vo D.H."/>
            <person name="Hani J."/>
        </authorList>
    </citation>
    <scope>NUCLEOTIDE SEQUENCE [LARGE SCALE GENOMIC DNA]</scope>
    <source>
        <strain>ATCC 204508 / S288c</strain>
    </source>
</reference>
<reference key="3">
    <citation type="journal article" date="2014" name="G3 (Bethesda)">
        <title>The reference genome sequence of Saccharomyces cerevisiae: Then and now.</title>
        <authorList>
            <person name="Engel S.R."/>
            <person name="Dietrich F.S."/>
            <person name="Fisk D.G."/>
            <person name="Binkley G."/>
            <person name="Balakrishnan R."/>
            <person name="Costanzo M.C."/>
            <person name="Dwight S.S."/>
            <person name="Hitz B.C."/>
            <person name="Karra K."/>
            <person name="Nash R.S."/>
            <person name="Weng S."/>
            <person name="Wong E.D."/>
            <person name="Lloyd P."/>
            <person name="Skrzypek M.S."/>
            <person name="Miyasato S.R."/>
            <person name="Simison M."/>
            <person name="Cherry J.M."/>
        </authorList>
    </citation>
    <scope>GENOME REANNOTATION</scope>
    <source>
        <strain>ATCC 204508 / S288c</strain>
    </source>
</reference>
<reference key="4">
    <citation type="journal article" date="1992" name="Cell">
        <title>Characterization of the yeast SWI1, SWI2, and SWI3 genes, which encode a global activator of transcription.</title>
        <authorList>
            <person name="Peterson C.L."/>
            <person name="Herskowitz I."/>
        </authorList>
    </citation>
    <scope>CHARACTERIZATION</scope>
</reference>
<reference key="5">
    <citation type="journal article" date="2003" name="Nature">
        <title>Global analysis of protein expression in yeast.</title>
        <authorList>
            <person name="Ghaemmaghami S."/>
            <person name="Huh W.-K."/>
            <person name="Bower K."/>
            <person name="Howson R.W."/>
            <person name="Belle A."/>
            <person name="Dephoure N."/>
            <person name="O'Shea E.K."/>
            <person name="Weissman J.S."/>
        </authorList>
    </citation>
    <scope>LEVEL OF PROTEIN EXPRESSION [LARGE SCALE ANALYSIS]</scope>
</reference>
<reference key="6">
    <citation type="journal article" date="2008" name="Mol. Cell. Proteomics">
        <title>A multidimensional chromatography technology for in-depth phosphoproteome analysis.</title>
        <authorList>
            <person name="Albuquerque C.P."/>
            <person name="Smolka M.B."/>
            <person name="Payne S.H."/>
            <person name="Bafna V."/>
            <person name="Eng J."/>
            <person name="Zhou H."/>
        </authorList>
    </citation>
    <scope>IDENTIFICATION BY MASS SPECTROMETRY [LARGE SCALE ANALYSIS]</scope>
</reference>
<reference key="7">
    <citation type="journal article" date="2008" name="Nat. Genet.">
        <title>Newly identified prion linked to the chromatin-remodeling factor Swi1 in Saccharomyces cerevisiae.</title>
        <authorList>
            <person name="Du Z."/>
            <person name="Park K.W."/>
            <person name="Yu H."/>
            <person name="Fan Q."/>
            <person name="Li L."/>
        </authorList>
    </citation>
    <scope>PRION FORMATION</scope>
    <scope>PRION CURING</scope>
    <scope>SUBCELLULAR LOCATION OF PRION AGGREGATES</scope>
</reference>
<reference key="8">
    <citation type="journal article" date="2009" name="Science">
        <title>Global analysis of Cdk1 substrate phosphorylation sites provides insights into evolution.</title>
        <authorList>
            <person name="Holt L.J."/>
            <person name="Tuch B.B."/>
            <person name="Villen J."/>
            <person name="Johnson A.D."/>
            <person name="Gygi S.P."/>
            <person name="Morgan D.O."/>
        </authorList>
    </citation>
    <scope>IDENTIFICATION BY MASS SPECTROMETRY [LARGE SCALE ANALYSIS]</scope>
</reference>
<reference key="9">
    <citation type="journal article" date="2010" name="Mol. Cell. Biol.">
        <title>Distinct subregions of Swi1 manifest striking differences in prion transmission and SWI/SNF function.</title>
        <authorList>
            <person name="Du Z."/>
            <person name="Crow E.T."/>
            <person name="Kang H.S."/>
            <person name="Li L."/>
        </authorList>
    </citation>
    <scope>PRION FORMATION</scope>
    <scope>AMYLOID FORMATION</scope>
</reference>
<reference key="10">
    <citation type="journal article" date="2011" name="Mol. Cell. Biol.">
        <title>A small, glutamine-free domain propagates the [SWI(+)] prion in budding yeast.</title>
        <authorList>
            <person name="Crow E.T."/>
            <person name="Du Z."/>
            <person name="Li L."/>
        </authorList>
    </citation>
    <scope>DOMAIN PRION</scope>
</reference>
<reference key="11">
    <citation type="journal article" date="2011" name="PLoS Genet.">
        <title>[SWI], the prion formed by the chromatin remodeling factor Swi1, is highly sensitive to alterations in Hsp70 chaperone system activity.</title>
        <authorList>
            <person name="Hines J.K."/>
            <person name="Li X."/>
            <person name="Du Z."/>
            <person name="Higurashi T."/>
            <person name="Li L."/>
            <person name="Craig E.A."/>
        </authorList>
    </citation>
    <scope>PRION FORMATION</scope>
</reference>
<reference key="12">
    <citation type="journal article" date="2003" name="Nat. Struct. Biol.">
        <title>Structural analysis of the yeast SWI/SNF chromatin remodeling complex.</title>
        <authorList>
            <person name="Smith C.L."/>
            <person name="Horowitz-Scherer R."/>
            <person name="Flanagan J.F."/>
            <person name="Woodcock C.L."/>
            <person name="Peterson C.L."/>
        </authorList>
    </citation>
    <scope>3D-STRUCTURE MODELING OF THE SWI/SNF COMPLEX</scope>
    <scope>ELECTRON MICROSCOPY OF THE SWI/SNF COMPLEX</scope>
</reference>
<reference key="13">
    <citation type="journal article" date="2001" name="J. Biomol. NMR">
        <title>1H, 13C and 15N resonance assignments and secondary structure of ADR6 DNA-binding domain.</title>
        <authorList>
            <person name="Tu X."/>
            <person name="Wu J."/>
            <person name="Xu Y."/>
            <person name="Shi Y."/>
        </authorList>
    </citation>
    <scope>STRUCTURE BY NMR OF 405-506</scope>
</reference>
<sequence>MDFFNLNNNNNNNNTTTTTTTTNNNNTNNNNTNNNNNPANNTNNNNSTGHSSNTNNNTNNNNTNTGASGVDDFQNFFDPKPFDQNLDSNNNNSNSNNNDNNNSNTVASSTNFTSPTAVVNNAAPANVTGGKAANFIQNQSPQFNSPYDSNNSNTNLNSLSPQAILAKNSIIDSSNLPLQAQQQLYGGNNNNNSTGIANDNVITPHFITNVQSISQNSSSSTPNTNSNSTPNANQQFLPFNNSASNNGNLTSNQLISNYAASNSMDRSSSASNEFVPNTSDNNNNSNNHNMRNNSNNKTSNNNNVTAVPAATPANTNNSTSNANTVFSERAAMFAALQQKQQQRFQALQQQQQQQQNQQQQNQQPQQQQQQQQNPKFLQSQRQQQQRSILQSLNPALQEKISTELNNKQYELFMKSLIENCKKRNMPLQSIPEIGNRKINLFYLYMLVQKFGGADQVTRTQQWSMVAQRLQISDYQQLESIYFRILLPYERHMISQEGIKETQAKRIFLQQFLQELLKKVQQQQQAAALANANNNINSASSAPTPAAPGASVPATAAPGTEAGIVPVSANTPKSLNSNININVNNNNIGQQQVKKPRKQRVKKKTKKELELERKEREDFQKRQQKLLEDQQRQQKLLLETKLRQQYEIELKKLPKVYKRSIVRNYKPLINRLKHYNGYDINYISKIGEKIDSNKPIFLFAPELGAINLHALSMSLQSKNLGEINTALNTLLVTSADSNLKISLVKYPELLDSLAILGMNLLSNLSQNVVPYHRNTSDYYYEDAGSNQYYVTQHDKMVDKIFEKVNNNATLTPNDSNDEKVTILVDSLTGNQLPTPTPTEMEPDLDTECFISMQSTSPAVKQWDLLPEPIRFLPNQFPLKIHRTPYLTSLKKIKDEIDDPFTKINTRGAEDPKVLINDQLSTISMILRNISFSDNNSRIMSRNFYLKRFISDLLWLVLIHPENFTCNRKILNFKKDLVIVLSNISHLLEIASSIDCLLILILVISFGQPKLNPMASSSSFGSESLTFNEFQLQWGKYQTFGVDILAKLFSLEKPNLNYFKSILLNKNTGNNLYDRNSNNNHKDKKLLRRLLNLYNDNNKNNNNRHNLLNDVVSFLFSAIPLQQVLSQSADPSLLIDQFSPVISQSLTSILVIVQKILPLSNEVFEISENNSDSNSNNNGNKDSSFNFNKNLPFVWLSSEENIGSGLLKLSEIILNINNSTSKNTLLQQQNYSKVLLPSINISCVQLIKCLVEKSICFENCLNNDPEILKKIASIPNLFPTDLEIFQLFTNPSVDIQIINQYQLLYNLKNDILTNLE</sequence>
<protein>
    <recommendedName>
        <fullName>SWI/SNF chromatin-remodeling complex subunit SWI1</fullName>
    </recommendedName>
    <alternativeName>
        <fullName>Regulatory protein GAM3</fullName>
    </alternativeName>
    <alternativeName>
        <fullName>SWI/SNF complex subunit SWI1</fullName>
    </alternativeName>
    <alternativeName>
        <fullName>Transcription regulatory protein ADR6</fullName>
    </alternativeName>
    <alternativeName>
        <fullName>Transcription regulatory protein SWI1</fullName>
    </alternativeName>
</protein>
<dbReference type="EMBL" id="X12493">
    <property type="protein sequence ID" value="CAA31013.1"/>
    <property type="molecule type" value="Genomic_DNA"/>
</dbReference>
<dbReference type="EMBL" id="U33335">
    <property type="protein sequence ID" value="AAB68089.1"/>
    <property type="molecule type" value="Genomic_DNA"/>
</dbReference>
<dbReference type="EMBL" id="BK006949">
    <property type="protein sequence ID" value="DAA11412.1"/>
    <property type="molecule type" value="Genomic_DNA"/>
</dbReference>
<dbReference type="PIR" id="S05728">
    <property type="entry name" value="TNBYR6"/>
</dbReference>
<dbReference type="RefSeq" id="NP_015309.1">
    <property type="nucleotide sequence ID" value="NM_001183830.2"/>
</dbReference>
<dbReference type="PDB" id="1KKX">
    <property type="method" value="NMR"/>
    <property type="chains" value="A=405-506"/>
</dbReference>
<dbReference type="PDB" id="1KN5">
    <property type="method" value="NMR"/>
    <property type="chains" value="A=405-506"/>
</dbReference>
<dbReference type="PDB" id="2LI6">
    <property type="method" value="NMR"/>
    <property type="chains" value="A=390-505"/>
</dbReference>
<dbReference type="PDB" id="6UXV">
    <property type="method" value="EM"/>
    <property type="resolution" value="4.70 A"/>
    <property type="chains" value="B=1-1314"/>
</dbReference>
<dbReference type="PDB" id="6UXW">
    <property type="method" value="EM"/>
    <property type="resolution" value="8.96 A"/>
    <property type="chains" value="B=1-1314"/>
</dbReference>
<dbReference type="PDB" id="7C4J">
    <property type="method" value="EM"/>
    <property type="resolution" value="2.89 A"/>
    <property type="chains" value="I=1-1314"/>
</dbReference>
<dbReference type="PDB" id="7EGM">
    <property type="method" value="EM"/>
    <property type="resolution" value="3.60 A"/>
    <property type="chains" value="B=251-1314"/>
</dbReference>
<dbReference type="PDB" id="7EGP">
    <property type="method" value="EM"/>
    <property type="resolution" value="6.90 A"/>
    <property type="chains" value="B=251-1314"/>
</dbReference>
<dbReference type="PDBsum" id="1KKX"/>
<dbReference type="PDBsum" id="1KN5"/>
<dbReference type="PDBsum" id="2LI6"/>
<dbReference type="PDBsum" id="6UXV"/>
<dbReference type="PDBsum" id="6UXW"/>
<dbReference type="PDBsum" id="7C4J"/>
<dbReference type="PDBsum" id="7EGM"/>
<dbReference type="PDBsum" id="7EGP"/>
<dbReference type="BMRB" id="P09547"/>
<dbReference type="EMDB" id="EMD-20933"/>
<dbReference type="EMDB" id="EMD-20934"/>
<dbReference type="EMDB" id="EMD-30285"/>
<dbReference type="EMDB" id="EMD-31136"/>
<dbReference type="EMDB" id="EMD-31137"/>
<dbReference type="SMR" id="P09547"/>
<dbReference type="BioGRID" id="36161">
    <property type="interactions" value="341"/>
</dbReference>
<dbReference type="ComplexPortal" id="CPX-1150">
    <property type="entry name" value="SWI/SNF chromatin remodelling complex"/>
</dbReference>
<dbReference type="DIP" id="DIP-1032N"/>
<dbReference type="FunCoup" id="P09547">
    <property type="interactions" value="482"/>
</dbReference>
<dbReference type="IntAct" id="P09547">
    <property type="interactions" value="40"/>
</dbReference>
<dbReference type="MINT" id="P09547"/>
<dbReference type="STRING" id="4932.YPL016W"/>
<dbReference type="GlyGen" id="P09547">
    <property type="glycosylation" value="5 sites, 1 O-linked glycan (2 sites)"/>
</dbReference>
<dbReference type="iPTMnet" id="P09547"/>
<dbReference type="PaxDb" id="4932-YPL016W"/>
<dbReference type="PeptideAtlas" id="P09547"/>
<dbReference type="EnsemblFungi" id="YPL016W_mRNA">
    <property type="protein sequence ID" value="YPL016W"/>
    <property type="gene ID" value="YPL016W"/>
</dbReference>
<dbReference type="GeneID" id="856091"/>
<dbReference type="KEGG" id="sce:YPL016W"/>
<dbReference type="AGR" id="SGD:S000005937"/>
<dbReference type="SGD" id="S000005937">
    <property type="gene designation" value="SWI1"/>
</dbReference>
<dbReference type="VEuPathDB" id="FungiDB:YPL016W"/>
<dbReference type="eggNOG" id="KOG2744">
    <property type="taxonomic scope" value="Eukaryota"/>
</dbReference>
<dbReference type="HOGENOM" id="CLU_002419_0_0_1"/>
<dbReference type="InParanoid" id="P09547"/>
<dbReference type="OMA" id="NPIVCGR"/>
<dbReference type="OrthoDB" id="1938591at2759"/>
<dbReference type="BioCyc" id="YEAST:G3O-33935-MONOMER"/>
<dbReference type="Reactome" id="R-SCE-3214815">
    <property type="pathway name" value="HDACs deacetylate histones"/>
</dbReference>
<dbReference type="BioGRID-ORCS" id="856091">
    <property type="hits" value="1 hit in 10 CRISPR screens"/>
</dbReference>
<dbReference type="EvolutionaryTrace" id="P09547"/>
<dbReference type="PRO" id="PR:P09547"/>
<dbReference type="Proteomes" id="UP000002311">
    <property type="component" value="Chromosome XVI"/>
</dbReference>
<dbReference type="RNAct" id="P09547">
    <property type="molecule type" value="protein"/>
</dbReference>
<dbReference type="GO" id="GO:0000785">
    <property type="term" value="C:chromatin"/>
    <property type="evidence" value="ECO:0000303"/>
    <property type="project" value="ComplexPortal"/>
</dbReference>
<dbReference type="GO" id="GO:0005634">
    <property type="term" value="C:nucleus"/>
    <property type="evidence" value="ECO:0000314"/>
    <property type="project" value="SGD"/>
</dbReference>
<dbReference type="GO" id="GO:0016514">
    <property type="term" value="C:SWI/SNF complex"/>
    <property type="evidence" value="ECO:0000314"/>
    <property type="project" value="SGD"/>
</dbReference>
<dbReference type="GO" id="GO:0061629">
    <property type="term" value="F:RNA polymerase II-specific DNA-binding transcription factor binding"/>
    <property type="evidence" value="ECO:0000315"/>
    <property type="project" value="SGD"/>
</dbReference>
<dbReference type="GO" id="GO:0000976">
    <property type="term" value="F:transcription cis-regulatory region binding"/>
    <property type="evidence" value="ECO:0000318"/>
    <property type="project" value="GO_Central"/>
</dbReference>
<dbReference type="GO" id="GO:0008270">
    <property type="term" value="F:zinc ion binding"/>
    <property type="evidence" value="ECO:0007669"/>
    <property type="project" value="UniProtKB-KW"/>
</dbReference>
<dbReference type="GO" id="GO:0034198">
    <property type="term" value="P:cellular response to amino acid starvation"/>
    <property type="evidence" value="ECO:0000315"/>
    <property type="project" value="SGD"/>
</dbReference>
<dbReference type="GO" id="GO:0006338">
    <property type="term" value="P:chromatin remodeling"/>
    <property type="evidence" value="ECO:0000314"/>
    <property type="project" value="ComplexPortal"/>
</dbReference>
<dbReference type="GO" id="GO:0006261">
    <property type="term" value="P:DNA-templated DNA replication"/>
    <property type="evidence" value="ECO:0000315"/>
    <property type="project" value="SGD"/>
</dbReference>
<dbReference type="GO" id="GO:0031496">
    <property type="term" value="P:positive regulation of mating type switching"/>
    <property type="evidence" value="ECO:0000315"/>
    <property type="project" value="SGD"/>
</dbReference>
<dbReference type="GO" id="GO:0045944">
    <property type="term" value="P:positive regulation of transcription by RNA polymerase II"/>
    <property type="evidence" value="ECO:0000315"/>
    <property type="project" value="SGD"/>
</dbReference>
<dbReference type="GO" id="GO:0006357">
    <property type="term" value="P:regulation of transcription by RNA polymerase II"/>
    <property type="evidence" value="ECO:0000314"/>
    <property type="project" value="ComplexPortal"/>
</dbReference>
<dbReference type="CDD" id="cd16871">
    <property type="entry name" value="ARID_Swi1p-like"/>
    <property type="match status" value="1"/>
</dbReference>
<dbReference type="FunFam" id="1.10.150.60:FF:000024">
    <property type="entry name" value="SWI/SNF chromatin-remodeling complex subunit SWI1"/>
    <property type="match status" value="1"/>
</dbReference>
<dbReference type="Gene3D" id="1.10.150.60">
    <property type="entry name" value="ARID DNA-binding domain"/>
    <property type="match status" value="1"/>
</dbReference>
<dbReference type="InterPro" id="IPR051232">
    <property type="entry name" value="ARID/SWI1_ChromRemod"/>
</dbReference>
<dbReference type="InterPro" id="IPR001606">
    <property type="entry name" value="ARID_dom"/>
</dbReference>
<dbReference type="InterPro" id="IPR036431">
    <property type="entry name" value="ARID_dom_sf"/>
</dbReference>
<dbReference type="PANTHER" id="PTHR13964:SF27">
    <property type="entry name" value="HAT-TRICK, ISOFORM D"/>
    <property type="match status" value="1"/>
</dbReference>
<dbReference type="PANTHER" id="PTHR13964">
    <property type="entry name" value="RBP-RELATED"/>
    <property type="match status" value="1"/>
</dbReference>
<dbReference type="Pfam" id="PF01388">
    <property type="entry name" value="ARID"/>
    <property type="match status" value="1"/>
</dbReference>
<dbReference type="SMART" id="SM01014">
    <property type="entry name" value="ARID"/>
    <property type="match status" value="1"/>
</dbReference>
<dbReference type="SMART" id="SM00501">
    <property type="entry name" value="BRIGHT"/>
    <property type="match status" value="1"/>
</dbReference>
<dbReference type="SUPFAM" id="SSF46774">
    <property type="entry name" value="ARID-like"/>
    <property type="match status" value="1"/>
</dbReference>
<dbReference type="PROSITE" id="PS51011">
    <property type="entry name" value="ARID"/>
    <property type="match status" value="1"/>
</dbReference>
<name>SWI1_YEAST</name>
<proteinExistence type="evidence at protein level"/>
<accession>P09547</accession>
<accession>D6W3Z6</accession>
<evidence type="ECO:0000250" key="1"/>
<evidence type="ECO:0000255" key="2">
    <source>
        <dbReference type="PROSITE-ProRule" id="PRU00355"/>
    </source>
</evidence>
<evidence type="ECO:0000256" key="3">
    <source>
        <dbReference type="SAM" id="MobiDB-lite"/>
    </source>
</evidence>
<evidence type="ECO:0000269" key="4">
    <source>
    </source>
</evidence>
<evidence type="ECO:0000269" key="5">
    <source>
    </source>
</evidence>
<evidence type="ECO:0000269" key="6">
    <source>
    </source>
</evidence>
<evidence type="ECO:0000305" key="7"/>
<evidence type="ECO:0000305" key="8">
    <source>
    </source>
</evidence>
<evidence type="ECO:0000305" key="9">
    <source>
    </source>
</evidence>
<evidence type="ECO:0000305" key="10">
    <source>
    </source>
</evidence>
<evidence type="ECO:0007829" key="11">
    <source>
        <dbReference type="PDB" id="1KKX"/>
    </source>
</evidence>
<evidence type="ECO:0007829" key="12">
    <source>
        <dbReference type="PDB" id="1KN5"/>
    </source>
</evidence>
<evidence type="ECO:0007829" key="13">
    <source>
        <dbReference type="PDB" id="2LI6"/>
    </source>
</evidence>
<evidence type="ECO:0007829" key="14">
    <source>
        <dbReference type="PDB" id="7C4J"/>
    </source>
</evidence>
<feature type="chain" id="PRO_0000200596" description="SWI/SNF chromatin-remodeling complex subunit SWI1">
    <location>
        <begin position="1"/>
        <end position="1314"/>
    </location>
</feature>
<feature type="domain" description="ARID" evidence="2">
    <location>
        <begin position="406"/>
        <end position="493"/>
    </location>
</feature>
<feature type="zinc finger region" description="C4-type">
    <location>
        <begin position="1241"/>
        <end position="1258"/>
    </location>
</feature>
<feature type="region of interest" description="Prion domain (PrD)">
    <location>
        <begin position="1"/>
        <end position="323"/>
    </location>
</feature>
<feature type="region of interest" description="Disordered" evidence="3">
    <location>
        <begin position="1"/>
        <end position="112"/>
    </location>
</feature>
<feature type="region of interest" description="Disordered" evidence="3">
    <location>
        <begin position="213"/>
        <end position="250"/>
    </location>
</feature>
<feature type="region of interest" description="Disordered" evidence="3">
    <location>
        <begin position="262"/>
        <end position="321"/>
    </location>
</feature>
<feature type="region of interest" description="Disordered" evidence="3">
    <location>
        <begin position="355"/>
        <end position="384"/>
    </location>
</feature>
<feature type="region of interest" description="Disordered" evidence="3">
    <location>
        <begin position="581"/>
        <end position="617"/>
    </location>
</feature>
<feature type="compositionally biased region" description="Low complexity" evidence="3">
    <location>
        <begin position="1"/>
        <end position="65"/>
    </location>
</feature>
<feature type="compositionally biased region" description="Low complexity" evidence="3">
    <location>
        <begin position="88"/>
        <end position="112"/>
    </location>
</feature>
<feature type="compositionally biased region" description="Low complexity" evidence="3">
    <location>
        <begin position="213"/>
        <end position="235"/>
    </location>
</feature>
<feature type="compositionally biased region" description="Polar residues" evidence="3">
    <location>
        <begin position="236"/>
        <end position="250"/>
    </location>
</feature>
<feature type="compositionally biased region" description="Low complexity" evidence="3">
    <location>
        <begin position="581"/>
        <end position="592"/>
    </location>
</feature>
<feature type="compositionally biased region" description="Basic residues" evidence="3">
    <location>
        <begin position="593"/>
        <end position="605"/>
    </location>
</feature>
<feature type="compositionally biased region" description="Basic and acidic residues" evidence="3">
    <location>
        <begin position="606"/>
        <end position="617"/>
    </location>
</feature>
<feature type="strand" evidence="13">
    <location>
        <begin position="396"/>
        <end position="398"/>
    </location>
</feature>
<feature type="strand" evidence="13">
    <location>
        <begin position="402"/>
        <end position="405"/>
    </location>
</feature>
<feature type="helix" evidence="11">
    <location>
        <begin position="408"/>
        <end position="422"/>
    </location>
</feature>
<feature type="strand" evidence="11">
    <location>
        <begin position="426"/>
        <end position="429"/>
    </location>
</feature>
<feature type="strand" evidence="11">
    <location>
        <begin position="434"/>
        <end position="437"/>
    </location>
</feature>
<feature type="helix" evidence="11">
    <location>
        <begin position="442"/>
        <end position="447"/>
    </location>
</feature>
<feature type="turn" evidence="11">
    <location>
        <begin position="448"/>
        <end position="450"/>
    </location>
</feature>
<feature type="helix" evidence="11">
    <location>
        <begin position="453"/>
        <end position="456"/>
    </location>
</feature>
<feature type="helix" evidence="11">
    <location>
        <begin position="460"/>
        <end position="469"/>
    </location>
</feature>
<feature type="helix" evidence="11">
    <location>
        <begin position="474"/>
        <end position="491"/>
    </location>
</feature>
<feature type="turn" evidence="12">
    <location>
        <begin position="492"/>
        <end position="494"/>
    </location>
</feature>
<feature type="strand" evidence="12">
    <location>
        <begin position="498"/>
        <end position="502"/>
    </location>
</feature>
<feature type="strand" evidence="14">
    <location>
        <begin position="660"/>
        <end position="664"/>
    </location>
</feature>
<feature type="strand" evidence="14">
    <location>
        <begin position="673"/>
        <end position="677"/>
    </location>
</feature>
<feature type="helix" evidence="14">
    <location>
        <begin position="679"/>
        <end position="692"/>
    </location>
</feature>
<feature type="helix" evidence="14">
    <location>
        <begin position="699"/>
        <end position="701"/>
    </location>
</feature>
<feature type="strand" evidence="14">
    <location>
        <begin position="702"/>
        <end position="706"/>
    </location>
</feature>
<feature type="helix" evidence="14">
    <location>
        <begin position="707"/>
        <end position="715"/>
    </location>
</feature>
<feature type="helix" evidence="14">
    <location>
        <begin position="719"/>
        <end position="733"/>
    </location>
</feature>
<feature type="strand" evidence="14">
    <location>
        <begin position="735"/>
        <end position="737"/>
    </location>
</feature>
<feature type="strand" evidence="14">
    <location>
        <begin position="742"/>
        <end position="744"/>
    </location>
</feature>
<feature type="helix" evidence="14">
    <location>
        <begin position="747"/>
        <end position="764"/>
    </location>
</feature>
<feature type="helix" evidence="14">
    <location>
        <begin position="791"/>
        <end position="808"/>
    </location>
</feature>
<feature type="strand" evidence="14">
    <location>
        <begin position="868"/>
        <end position="871"/>
    </location>
</feature>
<feature type="helix" evidence="14">
    <location>
        <begin position="884"/>
        <end position="895"/>
    </location>
</feature>
<feature type="strand" evidence="14">
    <location>
        <begin position="906"/>
        <end position="908"/>
    </location>
</feature>
<feature type="helix" evidence="14">
    <location>
        <begin position="910"/>
        <end position="928"/>
    </location>
</feature>
<feature type="helix" evidence="14">
    <location>
        <begin position="932"/>
        <end position="940"/>
    </location>
</feature>
<feature type="helix" evidence="14">
    <location>
        <begin position="942"/>
        <end position="956"/>
    </location>
</feature>
<feature type="helix" evidence="14">
    <location>
        <begin position="959"/>
        <end position="961"/>
    </location>
</feature>
<feature type="helix" evidence="14">
    <location>
        <begin position="965"/>
        <end position="982"/>
    </location>
</feature>
<feature type="helix" evidence="14">
    <location>
        <begin position="991"/>
        <end position="1002"/>
    </location>
</feature>
<feature type="strand" evidence="14">
    <location>
        <begin position="1030"/>
        <end position="1032"/>
    </location>
</feature>
<feature type="helix" evidence="14">
    <location>
        <begin position="1036"/>
        <end position="1046"/>
    </location>
</feature>
<feature type="helix" evidence="14">
    <location>
        <begin position="1052"/>
        <end position="1062"/>
    </location>
</feature>
<feature type="helix" evidence="14">
    <location>
        <begin position="1078"/>
        <end position="1093"/>
    </location>
</feature>
<feature type="helix" evidence="14">
    <location>
        <begin position="1104"/>
        <end position="1115"/>
    </location>
</feature>
<feature type="helix" evidence="14">
    <location>
        <begin position="1119"/>
        <end position="1124"/>
    </location>
</feature>
<feature type="helix" evidence="14">
    <location>
        <begin position="1130"/>
        <end position="1153"/>
    </location>
</feature>
<feature type="helix" evidence="14">
    <location>
        <begin position="1189"/>
        <end position="1194"/>
    </location>
</feature>
<feature type="strand" evidence="14">
    <location>
        <begin position="1196"/>
        <end position="1198"/>
    </location>
</feature>
<feature type="helix" evidence="14">
    <location>
        <begin position="1200"/>
        <end position="1213"/>
    </location>
</feature>
<feature type="helix" evidence="14">
    <location>
        <begin position="1234"/>
        <end position="1259"/>
    </location>
</feature>
<feature type="helix" evidence="14">
    <location>
        <begin position="1265"/>
        <end position="1270"/>
    </location>
</feature>
<feature type="helix" evidence="14">
    <location>
        <begin position="1279"/>
        <end position="1287"/>
    </location>
</feature>
<feature type="strand" evidence="14">
    <location>
        <begin position="1289"/>
        <end position="1291"/>
    </location>
</feature>
<feature type="helix" evidence="14">
    <location>
        <begin position="1293"/>
        <end position="1313"/>
    </location>
</feature>